<accession>Q5N2R3</accession>
<evidence type="ECO:0000255" key="1">
    <source>
        <dbReference type="HAMAP-Rule" id="MF_00066"/>
    </source>
</evidence>
<sequence>MTQVVPGIAPHGGQLIQRIATAAERQEFLAQADHLPRVQLDERALSDLVMIAIGGFSPLNGFMGQTDYESVVDDMRLANGLPWSVPITLSVTEEVAEPLKEGGWVRLDDAQGRFVGVLELTQKYRYNKVHEATNVYRTDEEQHPGVAVVYAQGPINLAGPIWLLQRDAHPLFPSYQIDPIASRQQFADRGWKTVVGFQTRNPIHRAHEYIIKCALETVDGLFLHPLVGATKSDDIPADVRMRCYEIMLEHYFPQDRVILAINPSAMRYAGPREAIFHALIRKNYGCTHFIVGRDHAGVGNYYGTYDAQHLFDEFKPEELGILPMKFEHAFYCTRTQAMASTKTSPSSPEERIHLSGTKVRELLRKGELPPPEFSRPEVAAELIRAMRSDSEVAAV</sequence>
<gene>
    <name evidence="1" type="primary">sat</name>
    <name type="ordered locus">syc1217_c</name>
</gene>
<feature type="chain" id="PRO_0000340633" description="Sulfate adenylyltransferase">
    <location>
        <begin position="1"/>
        <end position="395"/>
    </location>
</feature>
<comment type="catalytic activity">
    <reaction evidence="1">
        <text>sulfate + ATP + H(+) = adenosine 5'-phosphosulfate + diphosphate</text>
        <dbReference type="Rhea" id="RHEA:18133"/>
        <dbReference type="ChEBI" id="CHEBI:15378"/>
        <dbReference type="ChEBI" id="CHEBI:16189"/>
        <dbReference type="ChEBI" id="CHEBI:30616"/>
        <dbReference type="ChEBI" id="CHEBI:33019"/>
        <dbReference type="ChEBI" id="CHEBI:58243"/>
        <dbReference type="EC" id="2.7.7.4"/>
    </reaction>
</comment>
<comment type="pathway">
    <text evidence="1">Sulfur metabolism; hydrogen sulfide biosynthesis; sulfite from sulfate: step 1/3.</text>
</comment>
<comment type="similarity">
    <text evidence="1">Belongs to the sulfate adenylyltransferase family.</text>
</comment>
<organism>
    <name type="scientific">Synechococcus sp. (strain ATCC 27144 / PCC 6301 / SAUG 1402/1)</name>
    <name type="common">Anacystis nidulans</name>
    <dbReference type="NCBI Taxonomy" id="269084"/>
    <lineage>
        <taxon>Bacteria</taxon>
        <taxon>Bacillati</taxon>
        <taxon>Cyanobacteriota</taxon>
        <taxon>Cyanophyceae</taxon>
        <taxon>Synechococcales</taxon>
        <taxon>Synechococcaceae</taxon>
        <taxon>Synechococcus</taxon>
    </lineage>
</organism>
<reference key="1">
    <citation type="journal article" date="2007" name="Photosyn. Res.">
        <title>Complete nucleotide sequence of the freshwater unicellular cyanobacterium Synechococcus elongatus PCC 6301 chromosome: gene content and organization.</title>
        <authorList>
            <person name="Sugita C."/>
            <person name="Ogata K."/>
            <person name="Shikata M."/>
            <person name="Jikuya H."/>
            <person name="Takano J."/>
            <person name="Furumichi M."/>
            <person name="Kanehisa M."/>
            <person name="Omata T."/>
            <person name="Sugiura M."/>
            <person name="Sugita M."/>
        </authorList>
    </citation>
    <scope>NUCLEOTIDE SEQUENCE [LARGE SCALE GENOMIC DNA]</scope>
    <source>
        <strain>ATCC 27144 / PCC 6301 / SAUG 1402/1</strain>
    </source>
</reference>
<keyword id="KW-0067">ATP-binding</keyword>
<keyword id="KW-0547">Nucleotide-binding</keyword>
<keyword id="KW-0548">Nucleotidyltransferase</keyword>
<keyword id="KW-0808">Transferase</keyword>
<proteinExistence type="inferred from homology"/>
<dbReference type="EC" id="2.7.7.4" evidence="1"/>
<dbReference type="EMBL" id="AP008231">
    <property type="protein sequence ID" value="BAD79407.1"/>
    <property type="molecule type" value="Genomic_DNA"/>
</dbReference>
<dbReference type="RefSeq" id="WP_011243529.1">
    <property type="nucleotide sequence ID" value="NZ_CP085785.1"/>
</dbReference>
<dbReference type="SMR" id="Q5N2R3"/>
<dbReference type="GeneID" id="72429111"/>
<dbReference type="KEGG" id="syc:syc1217_c"/>
<dbReference type="eggNOG" id="COG2046">
    <property type="taxonomic scope" value="Bacteria"/>
</dbReference>
<dbReference type="UniPathway" id="UPA00140">
    <property type="reaction ID" value="UER00204"/>
</dbReference>
<dbReference type="Proteomes" id="UP000001175">
    <property type="component" value="Chromosome"/>
</dbReference>
<dbReference type="GO" id="GO:0005524">
    <property type="term" value="F:ATP binding"/>
    <property type="evidence" value="ECO:0007669"/>
    <property type="project" value="UniProtKB-KW"/>
</dbReference>
<dbReference type="GO" id="GO:0004781">
    <property type="term" value="F:sulfate adenylyltransferase (ATP) activity"/>
    <property type="evidence" value="ECO:0007669"/>
    <property type="project" value="UniProtKB-UniRule"/>
</dbReference>
<dbReference type="GO" id="GO:0070814">
    <property type="term" value="P:hydrogen sulfide biosynthetic process"/>
    <property type="evidence" value="ECO:0007669"/>
    <property type="project" value="UniProtKB-UniRule"/>
</dbReference>
<dbReference type="GO" id="GO:0000103">
    <property type="term" value="P:sulfate assimilation"/>
    <property type="evidence" value="ECO:0007669"/>
    <property type="project" value="UniProtKB-UniRule"/>
</dbReference>
<dbReference type="CDD" id="cd00517">
    <property type="entry name" value="ATPS"/>
    <property type="match status" value="1"/>
</dbReference>
<dbReference type="Gene3D" id="3.40.50.620">
    <property type="entry name" value="HUPs"/>
    <property type="match status" value="1"/>
</dbReference>
<dbReference type="Gene3D" id="3.10.400.10">
    <property type="entry name" value="Sulfate adenylyltransferase"/>
    <property type="match status" value="1"/>
</dbReference>
<dbReference type="HAMAP" id="MF_00066">
    <property type="entry name" value="Sulf_adenylyltr"/>
    <property type="match status" value="1"/>
</dbReference>
<dbReference type="InterPro" id="IPR025980">
    <property type="entry name" value="ATP-Sase_PUA-like_dom"/>
</dbReference>
<dbReference type="InterPro" id="IPR015947">
    <property type="entry name" value="PUA-like_sf"/>
</dbReference>
<dbReference type="InterPro" id="IPR014729">
    <property type="entry name" value="Rossmann-like_a/b/a_fold"/>
</dbReference>
<dbReference type="InterPro" id="IPR020792">
    <property type="entry name" value="SO4_adenylyltransferase_pro"/>
</dbReference>
<dbReference type="InterPro" id="IPR024951">
    <property type="entry name" value="Sulfurylase_cat_dom"/>
</dbReference>
<dbReference type="InterPro" id="IPR002650">
    <property type="entry name" value="Sulphate_adenylyltransferase"/>
</dbReference>
<dbReference type="NCBIfam" id="NF003166">
    <property type="entry name" value="PRK04149.1"/>
    <property type="match status" value="1"/>
</dbReference>
<dbReference type="NCBIfam" id="TIGR00339">
    <property type="entry name" value="sopT"/>
    <property type="match status" value="1"/>
</dbReference>
<dbReference type="PANTHER" id="PTHR43509">
    <property type="match status" value="1"/>
</dbReference>
<dbReference type="PANTHER" id="PTHR43509:SF1">
    <property type="entry name" value="SULFATE ADENYLYLTRANSFERASE"/>
    <property type="match status" value="1"/>
</dbReference>
<dbReference type="Pfam" id="PF01747">
    <property type="entry name" value="ATP-sulfurylase"/>
    <property type="match status" value="1"/>
</dbReference>
<dbReference type="Pfam" id="PF14306">
    <property type="entry name" value="PUA_2"/>
    <property type="match status" value="1"/>
</dbReference>
<dbReference type="SUPFAM" id="SSF52374">
    <property type="entry name" value="Nucleotidylyl transferase"/>
    <property type="match status" value="1"/>
</dbReference>
<dbReference type="SUPFAM" id="SSF88697">
    <property type="entry name" value="PUA domain-like"/>
    <property type="match status" value="1"/>
</dbReference>
<protein>
    <recommendedName>
        <fullName evidence="1">Sulfate adenylyltransferase</fullName>
        <ecNumber evidence="1">2.7.7.4</ecNumber>
    </recommendedName>
    <alternativeName>
        <fullName evidence="1">ATP-sulfurylase</fullName>
    </alternativeName>
    <alternativeName>
        <fullName evidence="1">Sulfate adenylate transferase</fullName>
        <shortName evidence="1">SAT</shortName>
    </alternativeName>
</protein>
<name>SAT_SYNP6</name>